<dbReference type="EMBL" id="CU329671">
    <property type="protein sequence ID" value="CAA22290.1"/>
    <property type="molecule type" value="Genomic_DNA"/>
</dbReference>
<dbReference type="PIR" id="T40467">
    <property type="entry name" value="T40467"/>
</dbReference>
<dbReference type="RefSeq" id="NP_595193.1">
    <property type="nucleotide sequence ID" value="NM_001021100.2"/>
</dbReference>
<dbReference type="SMR" id="O94362"/>
<dbReference type="BioGRID" id="277488">
    <property type="interactions" value="4"/>
</dbReference>
<dbReference type="FunCoup" id="O94362">
    <property type="interactions" value="376"/>
</dbReference>
<dbReference type="STRING" id="284812.O94362"/>
<dbReference type="PaxDb" id="4896-SPBC428.15.1"/>
<dbReference type="EnsemblFungi" id="SPBC428.15.1">
    <property type="protein sequence ID" value="SPBC428.15.1:pep"/>
    <property type="gene ID" value="SPBC428.15"/>
</dbReference>
<dbReference type="KEGG" id="spo:2540972"/>
<dbReference type="PomBase" id="SPBC428.15"/>
<dbReference type="VEuPathDB" id="FungiDB:SPBC428.15"/>
<dbReference type="eggNOG" id="KOG1491">
    <property type="taxonomic scope" value="Eukaryota"/>
</dbReference>
<dbReference type="HOGENOM" id="CLU_037276_1_0_1"/>
<dbReference type="InParanoid" id="O94362"/>
<dbReference type="OMA" id="WILGNLM"/>
<dbReference type="PhylomeDB" id="O94362"/>
<dbReference type="PRO" id="PR:O94362"/>
<dbReference type="Proteomes" id="UP000002485">
    <property type="component" value="Chromosome II"/>
</dbReference>
<dbReference type="GO" id="GO:0005737">
    <property type="term" value="C:cytoplasm"/>
    <property type="evidence" value="ECO:0000318"/>
    <property type="project" value="GO_Central"/>
</dbReference>
<dbReference type="GO" id="GO:0005829">
    <property type="term" value="C:cytosol"/>
    <property type="evidence" value="ECO:0007005"/>
    <property type="project" value="PomBase"/>
</dbReference>
<dbReference type="GO" id="GO:0005634">
    <property type="term" value="C:nucleus"/>
    <property type="evidence" value="ECO:0007005"/>
    <property type="project" value="PomBase"/>
</dbReference>
<dbReference type="GO" id="GO:0005524">
    <property type="term" value="F:ATP binding"/>
    <property type="evidence" value="ECO:0000250"/>
    <property type="project" value="PomBase"/>
</dbReference>
<dbReference type="GO" id="GO:0016887">
    <property type="term" value="F:ATP hydrolysis activity"/>
    <property type="evidence" value="ECO:0000318"/>
    <property type="project" value="GO_Central"/>
</dbReference>
<dbReference type="GO" id="GO:0005525">
    <property type="term" value="F:GTP binding"/>
    <property type="evidence" value="ECO:0000303"/>
    <property type="project" value="PomBase"/>
</dbReference>
<dbReference type="CDD" id="cd01899">
    <property type="entry name" value="Ygr210"/>
    <property type="match status" value="1"/>
</dbReference>
<dbReference type="FunFam" id="1.10.8.470:FF:000001">
    <property type="entry name" value="GTP-binding protein homolog"/>
    <property type="match status" value="1"/>
</dbReference>
<dbReference type="Gene3D" id="1.10.8.470">
    <property type="match status" value="1"/>
</dbReference>
<dbReference type="Gene3D" id="3.10.20.30">
    <property type="match status" value="1"/>
</dbReference>
<dbReference type="Gene3D" id="3.40.50.300">
    <property type="entry name" value="P-loop containing nucleotide triphosphate hydrolases"/>
    <property type="match status" value="1"/>
</dbReference>
<dbReference type="InterPro" id="IPR012675">
    <property type="entry name" value="Beta-grasp_dom_sf"/>
</dbReference>
<dbReference type="InterPro" id="IPR031167">
    <property type="entry name" value="G_OBG"/>
</dbReference>
<dbReference type="InterPro" id="IPR006073">
    <property type="entry name" value="GTP-bd"/>
</dbReference>
<dbReference type="InterPro" id="IPR027417">
    <property type="entry name" value="P-loop_NTPase"/>
</dbReference>
<dbReference type="InterPro" id="IPR013646">
    <property type="entry name" value="YGR210-like_G4"/>
</dbReference>
<dbReference type="PANTHER" id="PTHR23305">
    <property type="entry name" value="OBG GTPASE FAMILY"/>
    <property type="match status" value="1"/>
</dbReference>
<dbReference type="PANTHER" id="PTHR23305:SF1">
    <property type="entry name" value="OBG-TYPE G DOMAIN-CONTAINING PROTEIN"/>
    <property type="match status" value="1"/>
</dbReference>
<dbReference type="Pfam" id="PF01926">
    <property type="entry name" value="MMR_HSR1"/>
    <property type="match status" value="1"/>
</dbReference>
<dbReference type="Pfam" id="PF08438">
    <property type="entry name" value="YGR210-like_G4"/>
    <property type="match status" value="1"/>
</dbReference>
<dbReference type="PRINTS" id="PR00326">
    <property type="entry name" value="GTP1OBG"/>
</dbReference>
<dbReference type="SUPFAM" id="SSF52540">
    <property type="entry name" value="P-loop containing nucleoside triphosphate hydrolases"/>
    <property type="match status" value="1"/>
</dbReference>
<dbReference type="PROSITE" id="PS51710">
    <property type="entry name" value="G_OBG"/>
    <property type="match status" value="1"/>
</dbReference>
<protein>
    <recommendedName>
        <fullName>Uncharacterized GTP-binding protein C428.15</fullName>
    </recommendedName>
</protein>
<sequence>MGRDILIGFVGKPSSGKSTMLNALTDATAKTGNFPFTTIEPNRAIGYAQIECACSRFGLQDKCKPIYGGCKNGVRSIPIQLLDVAGLIPGAHAGKGLGNKFLDDLRHADALVHVVDVSGTTDAEGKVCRGYDPSVDIAWLYKEITAWIGNNLREKWPNIVRRHIATKANPVNTLQSQFSGYGSTPAVTAKVLDSLHLDTPLEKWDDDTIEKVVNRFVDIKFPTVIALNKIDHPDADANISKIARKEDPNRLVLASAISEVFLRRLAKQGFVKYEEGSEFVDTLDDFPDSGLKPLSENLKTRIADLQDMVLFRHGSTGVCNVLAKAMELLNLIPVFPVKNVHNFANSPNEGVFRDCILVKQGTTAGQVSQMVLGGEAMSIVGVNGNVGESDVIVPGKTDILHFRLRKAEA</sequence>
<feature type="chain" id="PRO_0000339164" description="Uncharacterized GTP-binding protein C428.15">
    <location>
        <begin position="1"/>
        <end position="409"/>
    </location>
</feature>
<feature type="domain" description="OBG-type G" evidence="1">
    <location>
        <begin position="5"/>
        <end position="274"/>
    </location>
</feature>
<feature type="binding site" evidence="1">
    <location>
        <begin position="11"/>
        <end position="18"/>
    </location>
    <ligand>
        <name>GTP</name>
        <dbReference type="ChEBI" id="CHEBI:37565"/>
    </ligand>
</feature>
<feature type="binding site" evidence="1">
    <location>
        <begin position="83"/>
        <end position="87"/>
    </location>
    <ligand>
        <name>GTP</name>
        <dbReference type="ChEBI" id="CHEBI:37565"/>
    </ligand>
</feature>
<name>YHOF_SCHPO</name>
<organism>
    <name type="scientific">Schizosaccharomyces pombe (strain 972 / ATCC 24843)</name>
    <name type="common">Fission yeast</name>
    <dbReference type="NCBI Taxonomy" id="284812"/>
    <lineage>
        <taxon>Eukaryota</taxon>
        <taxon>Fungi</taxon>
        <taxon>Dikarya</taxon>
        <taxon>Ascomycota</taxon>
        <taxon>Taphrinomycotina</taxon>
        <taxon>Schizosaccharomycetes</taxon>
        <taxon>Schizosaccharomycetales</taxon>
        <taxon>Schizosaccharomycetaceae</taxon>
        <taxon>Schizosaccharomyces</taxon>
    </lineage>
</organism>
<gene>
    <name type="ORF">SPBC428.15</name>
</gene>
<reference key="1">
    <citation type="journal article" date="2002" name="Nature">
        <title>The genome sequence of Schizosaccharomyces pombe.</title>
        <authorList>
            <person name="Wood V."/>
            <person name="Gwilliam R."/>
            <person name="Rajandream M.A."/>
            <person name="Lyne M.H."/>
            <person name="Lyne R."/>
            <person name="Stewart A."/>
            <person name="Sgouros J.G."/>
            <person name="Peat N."/>
            <person name="Hayles J."/>
            <person name="Baker S.G."/>
            <person name="Basham D."/>
            <person name="Bowman S."/>
            <person name="Brooks K."/>
            <person name="Brown D."/>
            <person name="Brown S."/>
            <person name="Chillingworth T."/>
            <person name="Churcher C.M."/>
            <person name="Collins M."/>
            <person name="Connor R."/>
            <person name="Cronin A."/>
            <person name="Davis P."/>
            <person name="Feltwell T."/>
            <person name="Fraser A."/>
            <person name="Gentles S."/>
            <person name="Goble A."/>
            <person name="Hamlin N."/>
            <person name="Harris D.E."/>
            <person name="Hidalgo J."/>
            <person name="Hodgson G."/>
            <person name="Holroyd S."/>
            <person name="Hornsby T."/>
            <person name="Howarth S."/>
            <person name="Huckle E.J."/>
            <person name="Hunt S."/>
            <person name="Jagels K."/>
            <person name="James K.D."/>
            <person name="Jones L."/>
            <person name="Jones M."/>
            <person name="Leather S."/>
            <person name="McDonald S."/>
            <person name="McLean J."/>
            <person name="Mooney P."/>
            <person name="Moule S."/>
            <person name="Mungall K.L."/>
            <person name="Murphy L.D."/>
            <person name="Niblett D."/>
            <person name="Odell C."/>
            <person name="Oliver K."/>
            <person name="O'Neil S."/>
            <person name="Pearson D."/>
            <person name="Quail M.A."/>
            <person name="Rabbinowitsch E."/>
            <person name="Rutherford K.M."/>
            <person name="Rutter S."/>
            <person name="Saunders D."/>
            <person name="Seeger K."/>
            <person name="Sharp S."/>
            <person name="Skelton J."/>
            <person name="Simmonds M.N."/>
            <person name="Squares R."/>
            <person name="Squares S."/>
            <person name="Stevens K."/>
            <person name="Taylor K."/>
            <person name="Taylor R.G."/>
            <person name="Tivey A."/>
            <person name="Walsh S.V."/>
            <person name="Warren T."/>
            <person name="Whitehead S."/>
            <person name="Woodward J.R."/>
            <person name="Volckaert G."/>
            <person name="Aert R."/>
            <person name="Robben J."/>
            <person name="Grymonprez B."/>
            <person name="Weltjens I."/>
            <person name="Vanstreels E."/>
            <person name="Rieger M."/>
            <person name="Schaefer M."/>
            <person name="Mueller-Auer S."/>
            <person name="Gabel C."/>
            <person name="Fuchs M."/>
            <person name="Duesterhoeft A."/>
            <person name="Fritzc C."/>
            <person name="Holzer E."/>
            <person name="Moestl D."/>
            <person name="Hilbert H."/>
            <person name="Borzym K."/>
            <person name="Langer I."/>
            <person name="Beck A."/>
            <person name="Lehrach H."/>
            <person name="Reinhardt R."/>
            <person name="Pohl T.M."/>
            <person name="Eger P."/>
            <person name="Zimmermann W."/>
            <person name="Wedler H."/>
            <person name="Wambutt R."/>
            <person name="Purnelle B."/>
            <person name="Goffeau A."/>
            <person name="Cadieu E."/>
            <person name="Dreano S."/>
            <person name="Gloux S."/>
            <person name="Lelaure V."/>
            <person name="Mottier S."/>
            <person name="Galibert F."/>
            <person name="Aves S.J."/>
            <person name="Xiang Z."/>
            <person name="Hunt C."/>
            <person name="Moore K."/>
            <person name="Hurst S.M."/>
            <person name="Lucas M."/>
            <person name="Rochet M."/>
            <person name="Gaillardin C."/>
            <person name="Tallada V.A."/>
            <person name="Garzon A."/>
            <person name="Thode G."/>
            <person name="Daga R.R."/>
            <person name="Cruzado L."/>
            <person name="Jimenez J."/>
            <person name="Sanchez M."/>
            <person name="del Rey F."/>
            <person name="Benito J."/>
            <person name="Dominguez A."/>
            <person name="Revuelta J.L."/>
            <person name="Moreno S."/>
            <person name="Armstrong J."/>
            <person name="Forsburg S.L."/>
            <person name="Cerutti L."/>
            <person name="Lowe T."/>
            <person name="McCombie W.R."/>
            <person name="Paulsen I."/>
            <person name="Potashkin J."/>
            <person name="Shpakovski G.V."/>
            <person name="Ussery D."/>
            <person name="Barrell B.G."/>
            <person name="Nurse P."/>
        </authorList>
    </citation>
    <scope>NUCLEOTIDE SEQUENCE [LARGE SCALE GENOMIC DNA]</scope>
    <source>
        <strain>972 / ATCC 24843</strain>
    </source>
</reference>
<reference key="2">
    <citation type="journal article" date="2006" name="Nat. Biotechnol.">
        <title>ORFeome cloning and global analysis of protein localization in the fission yeast Schizosaccharomyces pombe.</title>
        <authorList>
            <person name="Matsuyama A."/>
            <person name="Arai R."/>
            <person name="Yashiroda Y."/>
            <person name="Shirai A."/>
            <person name="Kamata A."/>
            <person name="Sekido S."/>
            <person name="Kobayashi Y."/>
            <person name="Hashimoto A."/>
            <person name="Hamamoto M."/>
            <person name="Hiraoka Y."/>
            <person name="Horinouchi S."/>
            <person name="Yoshida M."/>
        </authorList>
    </citation>
    <scope>SUBCELLULAR LOCATION [LARGE SCALE ANALYSIS]</scope>
</reference>
<comment type="subcellular location">
    <subcellularLocation>
        <location evidence="2">Cytoplasm</location>
    </subcellularLocation>
    <subcellularLocation>
        <location evidence="2">Nucleus</location>
    </subcellularLocation>
</comment>
<comment type="similarity">
    <text evidence="1">Belongs to the TRAFAC class OBG-HflX-like GTPase superfamily. OBG GTPase family.</text>
</comment>
<keyword id="KW-0963">Cytoplasm</keyword>
<keyword id="KW-0342">GTP-binding</keyword>
<keyword id="KW-0547">Nucleotide-binding</keyword>
<keyword id="KW-0539">Nucleus</keyword>
<keyword id="KW-1185">Reference proteome</keyword>
<proteinExistence type="inferred from homology"/>
<accession>O94362</accession>
<evidence type="ECO:0000255" key="1">
    <source>
        <dbReference type="PROSITE-ProRule" id="PRU01047"/>
    </source>
</evidence>
<evidence type="ECO:0000269" key="2">
    <source>
    </source>
</evidence>